<organism>
    <name type="scientific">Bacillus phage phi29</name>
    <name type="common">Bacteriophage phi-29</name>
    <dbReference type="NCBI Taxonomy" id="2884424"/>
    <lineage>
        <taxon>Viruses</taxon>
        <taxon>Duplodnaviria</taxon>
        <taxon>Heunggongvirae</taxon>
        <taxon>Uroviricota</taxon>
        <taxon>Caudoviricetes</taxon>
        <taxon>Salasmaviridae</taxon>
        <taxon>Picovirinae</taxon>
        <taxon>Salasvirus</taxon>
        <taxon>Salasvirus phi29</taxon>
    </lineage>
</organism>
<gene>
    <name type="primary">16.6</name>
</gene>
<organismHost>
    <name type="scientific">Bacillus subtilis</name>
    <dbReference type="NCBI Taxonomy" id="1423"/>
</organismHost>
<name>GP166_BPPH2</name>
<sequence>MKLLTHVCHYCSFSFFTRKFDVFGAITKKDTPVVFCPTCGNQSLSVSHIEEEIR</sequence>
<protein>
    <recommendedName>
        <fullName>Gene product 16.6</fullName>
        <shortName>gp16.6</shortName>
    </recommendedName>
    <alternativeName>
        <fullName>Protein p16.6</fullName>
    </alternativeName>
</protein>
<keyword id="KW-0244">Early protein</keyword>
<keyword id="KW-1185">Reference proteome</keyword>
<comment type="similarity">
    <text evidence="1">Belongs to the phi29likevirus gp16.6 family.</text>
</comment>
<feature type="chain" id="PRO_0000106610" description="Gene product 16.6">
    <location>
        <begin position="1"/>
        <end position="54"/>
    </location>
</feature>
<proteinExistence type="inferred from homology"/>
<reference key="1">
    <citation type="journal article" date="1985" name="Gene">
        <title>The complete sequence of the Bacillus phage phi 29 right early region.</title>
        <authorList>
            <person name="Garvey K.J."/>
            <person name="Yoshikawa H."/>
            <person name="Ito J."/>
        </authorList>
    </citation>
    <scope>NUCLEOTIDE SEQUENCE [GENOMIC DNA]</scope>
</reference>
<reference key="2">
    <citation type="submission" date="2008-05" db="EMBL/GenBank/DDBJ databases">
        <authorList>
            <person name="Villegas A.P."/>
            <person name="Lingohr E.J."/>
            <person name="Ceyssens P.-J."/>
            <person name="Kropinski A.M."/>
        </authorList>
    </citation>
    <scope>NUCLEOTIDE SEQUENCE [GENOMIC DNA]</scope>
</reference>
<evidence type="ECO:0000305" key="1"/>
<accession>P16516</accession>
<accession>B3VMQ3</accession>
<dbReference type="EMBL" id="M14430">
    <property type="protein sequence ID" value="AAA88353.1"/>
    <property type="molecule type" value="Genomic_DNA"/>
</dbReference>
<dbReference type="EMBL" id="EU771092">
    <property type="protein sequence ID" value="ACE96040.1"/>
    <property type="molecule type" value="Genomic_DNA"/>
</dbReference>
<dbReference type="PIR" id="JN0034">
    <property type="entry name" value="JN0034"/>
</dbReference>
<dbReference type="RefSeq" id="YP_002004546.1">
    <property type="nucleotide sequence ID" value="NC_011048.1"/>
</dbReference>
<dbReference type="GeneID" id="6446505"/>
<dbReference type="KEGG" id="vg:6446505"/>
<dbReference type="Proteomes" id="UP000001207">
    <property type="component" value="Genome"/>
</dbReference>